<name>RIMM_COXBN</name>
<accession>A9KEE8</accession>
<gene>
    <name evidence="1" type="primary">rimM</name>
    <name type="ordered locus">CBUD_1630</name>
</gene>
<organism>
    <name type="scientific">Coxiella burnetii (strain Dugway 5J108-111)</name>
    <dbReference type="NCBI Taxonomy" id="434922"/>
    <lineage>
        <taxon>Bacteria</taxon>
        <taxon>Pseudomonadati</taxon>
        <taxon>Pseudomonadota</taxon>
        <taxon>Gammaproteobacteria</taxon>
        <taxon>Legionellales</taxon>
        <taxon>Coxiellaceae</taxon>
        <taxon>Coxiella</taxon>
    </lineage>
</organism>
<keyword id="KW-0143">Chaperone</keyword>
<keyword id="KW-0963">Cytoplasm</keyword>
<keyword id="KW-0690">Ribosome biogenesis</keyword>
<keyword id="KW-0698">rRNA processing</keyword>
<feature type="chain" id="PRO_1000074024" description="Ribosome maturation factor RimM">
    <location>
        <begin position="1"/>
        <end position="168"/>
    </location>
</feature>
<feature type="domain" description="PRC barrel" evidence="1">
    <location>
        <begin position="96"/>
        <end position="168"/>
    </location>
</feature>
<reference key="1">
    <citation type="journal article" date="2009" name="Infect. Immun.">
        <title>Comparative genomics reveal extensive transposon-mediated genomic plasticity and diversity among potential effector proteins within the genus Coxiella.</title>
        <authorList>
            <person name="Beare P.A."/>
            <person name="Unsworth N."/>
            <person name="Andoh M."/>
            <person name="Voth D.E."/>
            <person name="Omsland A."/>
            <person name="Gilk S.D."/>
            <person name="Williams K.P."/>
            <person name="Sobral B.W."/>
            <person name="Kupko J.J. III"/>
            <person name="Porcella S.F."/>
            <person name="Samuel J.E."/>
            <person name="Heinzen R.A."/>
        </authorList>
    </citation>
    <scope>NUCLEOTIDE SEQUENCE [LARGE SCALE GENOMIC DNA]</scope>
    <source>
        <strain>Dugway 5J108-111</strain>
    </source>
</reference>
<protein>
    <recommendedName>
        <fullName evidence="1">Ribosome maturation factor RimM</fullName>
    </recommendedName>
</protein>
<comment type="function">
    <text evidence="1">An accessory protein needed during the final step in the assembly of 30S ribosomal subunit, possibly for assembly of the head region. Essential for efficient processing of 16S rRNA. May be needed both before and after RbfA during the maturation of 16S rRNA. It has affinity for free ribosomal 30S subunits but not for 70S ribosomes.</text>
</comment>
<comment type="subunit">
    <text evidence="1">Binds ribosomal protein uS19.</text>
</comment>
<comment type="subcellular location">
    <subcellularLocation>
        <location evidence="1">Cytoplasm</location>
    </subcellularLocation>
</comment>
<comment type="domain">
    <text evidence="1">The PRC barrel domain binds ribosomal protein uS19.</text>
</comment>
<comment type="similarity">
    <text evidence="1">Belongs to the RimM family.</text>
</comment>
<dbReference type="EMBL" id="CP000733">
    <property type="protein sequence ID" value="ABS77458.1"/>
    <property type="molecule type" value="Genomic_DNA"/>
</dbReference>
<dbReference type="RefSeq" id="WP_010957579.1">
    <property type="nucleotide sequence ID" value="NC_009727.1"/>
</dbReference>
<dbReference type="SMR" id="A9KEE8"/>
<dbReference type="KEGG" id="cbd:CBUD_1630"/>
<dbReference type="HOGENOM" id="CLU_077636_1_0_6"/>
<dbReference type="Proteomes" id="UP000008555">
    <property type="component" value="Chromosome"/>
</dbReference>
<dbReference type="GO" id="GO:0005737">
    <property type="term" value="C:cytoplasm"/>
    <property type="evidence" value="ECO:0007669"/>
    <property type="project" value="UniProtKB-SubCell"/>
</dbReference>
<dbReference type="GO" id="GO:0005840">
    <property type="term" value="C:ribosome"/>
    <property type="evidence" value="ECO:0007669"/>
    <property type="project" value="InterPro"/>
</dbReference>
<dbReference type="GO" id="GO:0043022">
    <property type="term" value="F:ribosome binding"/>
    <property type="evidence" value="ECO:0007669"/>
    <property type="project" value="InterPro"/>
</dbReference>
<dbReference type="GO" id="GO:0042274">
    <property type="term" value="P:ribosomal small subunit biogenesis"/>
    <property type="evidence" value="ECO:0007669"/>
    <property type="project" value="UniProtKB-UniRule"/>
</dbReference>
<dbReference type="GO" id="GO:0006364">
    <property type="term" value="P:rRNA processing"/>
    <property type="evidence" value="ECO:0007669"/>
    <property type="project" value="UniProtKB-UniRule"/>
</dbReference>
<dbReference type="Gene3D" id="2.30.30.240">
    <property type="entry name" value="PRC-barrel domain"/>
    <property type="match status" value="1"/>
</dbReference>
<dbReference type="Gene3D" id="2.40.30.60">
    <property type="entry name" value="RimM"/>
    <property type="match status" value="1"/>
</dbReference>
<dbReference type="HAMAP" id="MF_00014">
    <property type="entry name" value="Ribosome_mat_RimM"/>
    <property type="match status" value="1"/>
</dbReference>
<dbReference type="InterPro" id="IPR011033">
    <property type="entry name" value="PRC_barrel-like_sf"/>
</dbReference>
<dbReference type="InterPro" id="IPR056792">
    <property type="entry name" value="PRC_RimM"/>
</dbReference>
<dbReference type="InterPro" id="IPR011961">
    <property type="entry name" value="RimM"/>
</dbReference>
<dbReference type="InterPro" id="IPR002676">
    <property type="entry name" value="RimM_N"/>
</dbReference>
<dbReference type="InterPro" id="IPR036976">
    <property type="entry name" value="RimM_N_sf"/>
</dbReference>
<dbReference type="InterPro" id="IPR009000">
    <property type="entry name" value="Transl_B-barrel_sf"/>
</dbReference>
<dbReference type="NCBIfam" id="TIGR02273">
    <property type="entry name" value="16S_RimM"/>
    <property type="match status" value="1"/>
</dbReference>
<dbReference type="PANTHER" id="PTHR33692">
    <property type="entry name" value="RIBOSOME MATURATION FACTOR RIMM"/>
    <property type="match status" value="1"/>
</dbReference>
<dbReference type="PANTHER" id="PTHR33692:SF1">
    <property type="entry name" value="RIBOSOME MATURATION FACTOR RIMM"/>
    <property type="match status" value="1"/>
</dbReference>
<dbReference type="Pfam" id="PF24986">
    <property type="entry name" value="PRC_RimM"/>
    <property type="match status" value="1"/>
</dbReference>
<dbReference type="Pfam" id="PF01782">
    <property type="entry name" value="RimM"/>
    <property type="match status" value="1"/>
</dbReference>
<dbReference type="SUPFAM" id="SSF50346">
    <property type="entry name" value="PRC-barrel domain"/>
    <property type="match status" value="1"/>
</dbReference>
<dbReference type="SUPFAM" id="SSF50447">
    <property type="entry name" value="Translation proteins"/>
    <property type="match status" value="1"/>
</dbReference>
<evidence type="ECO:0000255" key="1">
    <source>
        <dbReference type="HAMAP-Rule" id="MF_00014"/>
    </source>
</evidence>
<sequence>MKPNDKVIIGRLARPYGLRGWIKVVSFTHPIDNLLNHPTWQIQHNNEWQPLKLQAGKLHEPFLVVKLENIDDPETAKHYTNDLIAIERGALGALKEGDYYWTDLIGLAVVNTHGIELGTVDSLIETGSNDVLVVRSKERERLIPYTSYTIQSIDLEKKIIVVEWDADF</sequence>
<proteinExistence type="inferred from homology"/>